<organism>
    <name type="scientific">Staphylococcus aureus (strain bovine RF122 / ET3-1)</name>
    <dbReference type="NCBI Taxonomy" id="273036"/>
    <lineage>
        <taxon>Bacteria</taxon>
        <taxon>Bacillati</taxon>
        <taxon>Bacillota</taxon>
        <taxon>Bacilli</taxon>
        <taxon>Bacillales</taxon>
        <taxon>Staphylococcaceae</taxon>
        <taxon>Staphylococcus</taxon>
    </lineage>
</organism>
<keyword id="KW-0175">Coiled coil</keyword>
<keyword id="KW-0436">Ligase</keyword>
<feature type="chain" id="PRO_0000378252" description="Putative cysteine ligase BshC">
    <location>
        <begin position="1"/>
        <end position="537"/>
    </location>
</feature>
<feature type="coiled-coil region" evidence="1">
    <location>
        <begin position="422"/>
        <end position="450"/>
    </location>
</feature>
<sequence length="537" mass="62832">MDCKVVSLNEKDQFIPKIKSSDPVITGLFQYDAAQQTSFEKRMSKENNGREAALANVIREYMSDLKLSSEQELNIQHLANGSKVVIGGQQAGLFGGPLYIFHKIFSIITLSKELTDTHKQQVVPVFWIAGEDHDFDEVNHTFVYNENHGSLHKVKYHTMEMPETTISRYYPDKAELKQTLKTMFIHMKETVHTQGLLEICDRIIDQYDSWTDMFKALLHETFKAYGVLFIDAQFEPLRKMEAPMFKKILKKHQLLDDAFRATQQRTQNQGLKAMIQTDTNVHLFLHDENMRQLVSYDGKHFKLNKTDKTYVKEEIINIAENQPELFSNNVVTRPLMEEWLFNTVAFIGGPSEIKYWAELKDVFELFDVEMPIVMPRLRITYLNDRIEKILSKYNIPLEKVLVDGVEGERSKFIRELASHQFIEKVEGMIEQQRRLNQDLLDEVAGNQNNINLVNKNNEIHIQQYDYLLKRYLLNIERENDISMKQFREIQETLHPMGGLQERIWNPLQILNDFGTDVFKPSTYPPLSYTFDHIIIKP</sequence>
<evidence type="ECO:0000255" key="1">
    <source>
        <dbReference type="HAMAP-Rule" id="MF_01867"/>
    </source>
</evidence>
<accession>Q2YXE5</accession>
<reference key="1">
    <citation type="journal article" date="2007" name="PLoS ONE">
        <title>Molecular correlates of host specialization in Staphylococcus aureus.</title>
        <authorList>
            <person name="Herron-Olson L."/>
            <person name="Fitzgerald J.R."/>
            <person name="Musser J.M."/>
            <person name="Kapur V."/>
        </authorList>
    </citation>
    <scope>NUCLEOTIDE SEQUENCE [LARGE SCALE GENOMIC DNA]</scope>
    <source>
        <strain>bovine RF122 / ET3-1</strain>
    </source>
</reference>
<protein>
    <recommendedName>
        <fullName evidence="1">Putative cysteine ligase BshC</fullName>
        <ecNumber evidence="1">6.-.-.-</ecNumber>
    </recommendedName>
</protein>
<dbReference type="EC" id="6.-.-.-" evidence="1"/>
<dbReference type="EMBL" id="AJ938182">
    <property type="protein sequence ID" value="CAI80729.1"/>
    <property type="molecule type" value="Genomic_DNA"/>
</dbReference>
<dbReference type="RefSeq" id="WP_000340468.1">
    <property type="nucleotide sequence ID" value="NC_007622.1"/>
</dbReference>
<dbReference type="SMR" id="Q2YXE5"/>
<dbReference type="KEGG" id="sab:SAB1041"/>
<dbReference type="HOGENOM" id="CLU_022249_0_0_9"/>
<dbReference type="GO" id="GO:0016874">
    <property type="term" value="F:ligase activity"/>
    <property type="evidence" value="ECO:0007669"/>
    <property type="project" value="UniProtKB-UniRule"/>
</dbReference>
<dbReference type="HAMAP" id="MF_01867">
    <property type="entry name" value="BshC"/>
    <property type="match status" value="1"/>
</dbReference>
<dbReference type="InterPro" id="IPR011199">
    <property type="entry name" value="Bacillithiol_biosynth_BshC"/>
</dbReference>
<dbReference type="InterPro" id="IPR055399">
    <property type="entry name" value="CC_BshC"/>
</dbReference>
<dbReference type="InterPro" id="IPR055398">
    <property type="entry name" value="Rossmann-like_BshC"/>
</dbReference>
<dbReference type="NCBIfam" id="TIGR03998">
    <property type="entry name" value="thiol_BshC"/>
    <property type="match status" value="1"/>
</dbReference>
<dbReference type="Pfam" id="PF24850">
    <property type="entry name" value="CC_BshC"/>
    <property type="match status" value="1"/>
</dbReference>
<dbReference type="Pfam" id="PF10079">
    <property type="entry name" value="Rossmann-like_BshC"/>
    <property type="match status" value="1"/>
</dbReference>
<dbReference type="PIRSF" id="PIRSF012535">
    <property type="entry name" value="UCP012535"/>
    <property type="match status" value="1"/>
</dbReference>
<name>BSHC_STAAB</name>
<comment type="function">
    <text evidence="1">Involved in bacillithiol (BSH) biosynthesis. May catalyze the last step of the pathway, the addition of cysteine to glucosamine malate (GlcN-Mal) to generate BSH.</text>
</comment>
<comment type="similarity">
    <text evidence="1">Belongs to the BshC family.</text>
</comment>
<proteinExistence type="inferred from homology"/>
<gene>
    <name evidence="1" type="primary">bshC</name>
    <name type="ordered locus">SAB1041</name>
</gene>